<accession>Q01226</accession>
<accession>Q76ZM0</accession>
<proteinExistence type="inferred from homology"/>
<name>SLFN_VACCW</name>
<sequence>MKRLETIRHMWSVVYDHFDIVNGKECCYVHTHLSNQNLIPSTVKTNLYMKTMGSCIQMDSMEALEYLSELKESGGWSPRPEMQEFEYPDGVEDTESIERLVEEFFNRSELQAGESVKFGNSINVKHTSVSAKQLRTRIRQQLPLYSHLLPTQRVDICSLELIIIHTK</sequence>
<organismHost>
    <name type="scientific">Bos taurus</name>
    <name type="common">Bovine</name>
    <dbReference type="NCBI Taxonomy" id="9913"/>
</organismHost>
<feature type="chain" id="PRO_0000099356" description="Schlafen-like protein">
    <location>
        <begin position="1"/>
        <end position="167"/>
    </location>
</feature>
<protein>
    <recommendedName>
        <fullName evidence="1">Schlafen-like protein</fullName>
    </recommendedName>
    <alternativeName>
        <fullName>Protein B3</fullName>
    </alternativeName>
</protein>
<reference key="1">
    <citation type="journal article" date="1991" name="J. Gen. Virol.">
        <title>Nucleotide sequence of 42 kbp of vaccinia virus strain WR from near the right inverted terminal repeat.</title>
        <authorList>
            <person name="Smith G.L."/>
            <person name="Chan Y.S."/>
            <person name="Howard S.T."/>
        </authorList>
    </citation>
    <scope>NUCLEOTIDE SEQUENCE [GENOMIC DNA]</scope>
</reference>
<reference key="2">
    <citation type="submission" date="2003-02" db="EMBL/GenBank/DDBJ databases">
        <title>Sequencing of the coding region of Vaccinia-WR to an average 9-fold redundancy and an error rate of 0.16/10kb.</title>
        <authorList>
            <person name="Esposito J.J."/>
            <person name="Frace A.M."/>
            <person name="Sammons S.A."/>
            <person name="Olsen-Rasmussen M."/>
            <person name="Osborne J."/>
            <person name="Wohlhueter R."/>
        </authorList>
    </citation>
    <scope>NUCLEOTIDE SEQUENCE [LARGE SCALE GENOMIC DNA]</scope>
</reference>
<organism>
    <name type="scientific">Vaccinia virus (strain Western Reserve)</name>
    <name type="common">VACV</name>
    <name type="synonym">Vaccinia virus (strain WR)</name>
    <dbReference type="NCBI Taxonomy" id="10254"/>
    <lineage>
        <taxon>Viruses</taxon>
        <taxon>Varidnaviria</taxon>
        <taxon>Bamfordvirae</taxon>
        <taxon>Nucleocytoviricota</taxon>
        <taxon>Pokkesviricetes</taxon>
        <taxon>Chitovirales</taxon>
        <taxon>Poxviridae</taxon>
        <taxon>Chordopoxvirinae</taxon>
        <taxon>Orthopoxvirus</taxon>
        <taxon>Vaccinia virus</taxon>
    </lineage>
</organism>
<evidence type="ECO:0000305" key="1"/>
<gene>
    <name type="ordered locus">VACWR185</name>
    <name type="ORF">B3R</name>
</gene>
<dbReference type="EMBL" id="D11079">
    <property type="protein sequence ID" value="BAA01833.1"/>
    <property type="molecule type" value="Genomic_DNA"/>
</dbReference>
<dbReference type="EMBL" id="AY243312">
    <property type="protein sequence ID" value="AAO89464.1"/>
    <property type="molecule type" value="Genomic_DNA"/>
</dbReference>
<dbReference type="PIR" id="JQ1797">
    <property type="entry name" value="JQ1797"/>
</dbReference>
<dbReference type="RefSeq" id="YP_233067.1">
    <property type="nucleotide sequence ID" value="NC_006998.1"/>
</dbReference>
<dbReference type="SMR" id="Q01226"/>
<dbReference type="DNASU" id="3707656"/>
<dbReference type="GeneID" id="3707656"/>
<dbReference type="KEGG" id="vg:3707656"/>
<dbReference type="Proteomes" id="UP000000344">
    <property type="component" value="Genome"/>
</dbReference>
<dbReference type="InterPro" id="IPR031450">
    <property type="entry name" value="Poxin-SLFN/SLFN_N"/>
</dbReference>
<dbReference type="Pfam" id="PF17057">
    <property type="entry name" value="B3R"/>
    <property type="match status" value="1"/>
</dbReference>
<comment type="similarity">
    <text evidence="1">Belongs to the Schlafen family. Subgroup poxviridae B3 subfamily.</text>
</comment>
<comment type="caution">
    <text evidence="1">The Schlafen-like protein of this strain is much shorter than what is found in other strains.</text>
</comment>
<keyword id="KW-1185">Reference proteome</keyword>